<protein>
    <recommendedName>
        <fullName evidence="1">3-hydroxyacyl-[acyl-carrier-protein] dehydratase FabZ</fullName>
        <ecNumber evidence="1">4.2.1.59</ecNumber>
    </recommendedName>
    <alternativeName>
        <fullName evidence="1">(3R)-hydroxymyristoyl-[acyl-carrier-protein] dehydratase</fullName>
        <shortName evidence="1">(3R)-hydroxymyristoyl-ACP dehydrase</shortName>
    </alternativeName>
    <alternativeName>
        <fullName evidence="1">Beta-hydroxyacyl-ACP dehydratase</fullName>
    </alternativeName>
</protein>
<name>FABZ_MYXXD</name>
<sequence length="153" mass="16734">MDIGEILNLLPHRYPFLLVDRVVEIIPGQKLTAYKNVTINEPFFNGHFPGHPVMPGVLILEALAQATAILAYKSENMDPSRKLTYLMGVDGARFRKPVLPGDRLQLEIEVVRHKGAVWKTKGLATVDGARVAEGEFLATVVDKDADAAESAAS</sequence>
<feature type="chain" id="PRO_0000340790" description="3-hydroxyacyl-[acyl-carrier-protein] dehydratase FabZ">
    <location>
        <begin position="1"/>
        <end position="153"/>
    </location>
</feature>
<feature type="active site" evidence="1">
    <location>
        <position position="47"/>
    </location>
</feature>
<gene>
    <name evidence="1" type="primary">fabZ</name>
    <name type="ordered locus">MXAN_4725</name>
</gene>
<accession>Q1D386</accession>
<dbReference type="EC" id="4.2.1.59" evidence="1"/>
<dbReference type="EMBL" id="CP000113">
    <property type="protein sequence ID" value="ABF91809.1"/>
    <property type="molecule type" value="Genomic_DNA"/>
</dbReference>
<dbReference type="RefSeq" id="WP_011554712.1">
    <property type="nucleotide sequence ID" value="NC_008095.1"/>
</dbReference>
<dbReference type="SMR" id="Q1D386"/>
<dbReference type="STRING" id="246197.MXAN_4725"/>
<dbReference type="EnsemblBacteria" id="ABF91809">
    <property type="protein sequence ID" value="ABF91809"/>
    <property type="gene ID" value="MXAN_4725"/>
</dbReference>
<dbReference type="GeneID" id="41362024"/>
<dbReference type="KEGG" id="mxa:MXAN_4725"/>
<dbReference type="eggNOG" id="COG0764">
    <property type="taxonomic scope" value="Bacteria"/>
</dbReference>
<dbReference type="HOGENOM" id="CLU_078912_1_0_7"/>
<dbReference type="OrthoDB" id="9772788at2"/>
<dbReference type="Proteomes" id="UP000002402">
    <property type="component" value="Chromosome"/>
</dbReference>
<dbReference type="GO" id="GO:0005737">
    <property type="term" value="C:cytoplasm"/>
    <property type="evidence" value="ECO:0007669"/>
    <property type="project" value="UniProtKB-SubCell"/>
</dbReference>
<dbReference type="GO" id="GO:0016020">
    <property type="term" value="C:membrane"/>
    <property type="evidence" value="ECO:0007669"/>
    <property type="project" value="GOC"/>
</dbReference>
<dbReference type="GO" id="GO:0019171">
    <property type="term" value="F:(3R)-hydroxyacyl-[acyl-carrier-protein] dehydratase activity"/>
    <property type="evidence" value="ECO:0007669"/>
    <property type="project" value="UniProtKB-EC"/>
</dbReference>
<dbReference type="GO" id="GO:0006633">
    <property type="term" value="P:fatty acid biosynthetic process"/>
    <property type="evidence" value="ECO:0007669"/>
    <property type="project" value="UniProtKB-UniRule"/>
</dbReference>
<dbReference type="GO" id="GO:0009245">
    <property type="term" value="P:lipid A biosynthetic process"/>
    <property type="evidence" value="ECO:0007669"/>
    <property type="project" value="UniProtKB-UniRule"/>
</dbReference>
<dbReference type="CDD" id="cd01288">
    <property type="entry name" value="FabZ"/>
    <property type="match status" value="1"/>
</dbReference>
<dbReference type="FunFam" id="3.10.129.10:FF:000001">
    <property type="entry name" value="3-hydroxyacyl-[acyl-carrier-protein] dehydratase FabZ"/>
    <property type="match status" value="1"/>
</dbReference>
<dbReference type="Gene3D" id="3.10.129.10">
    <property type="entry name" value="Hotdog Thioesterase"/>
    <property type="match status" value="1"/>
</dbReference>
<dbReference type="HAMAP" id="MF_00406">
    <property type="entry name" value="FabZ"/>
    <property type="match status" value="1"/>
</dbReference>
<dbReference type="InterPro" id="IPR013114">
    <property type="entry name" value="FabA_FabZ"/>
</dbReference>
<dbReference type="InterPro" id="IPR010084">
    <property type="entry name" value="FabZ"/>
</dbReference>
<dbReference type="InterPro" id="IPR029069">
    <property type="entry name" value="HotDog_dom_sf"/>
</dbReference>
<dbReference type="NCBIfam" id="TIGR01750">
    <property type="entry name" value="fabZ"/>
    <property type="match status" value="1"/>
</dbReference>
<dbReference type="NCBIfam" id="NF000582">
    <property type="entry name" value="PRK00006.1"/>
    <property type="match status" value="1"/>
</dbReference>
<dbReference type="PANTHER" id="PTHR30272">
    <property type="entry name" value="3-HYDROXYACYL-[ACYL-CARRIER-PROTEIN] DEHYDRATASE"/>
    <property type="match status" value="1"/>
</dbReference>
<dbReference type="PANTHER" id="PTHR30272:SF1">
    <property type="entry name" value="3-HYDROXYACYL-[ACYL-CARRIER-PROTEIN] DEHYDRATASE"/>
    <property type="match status" value="1"/>
</dbReference>
<dbReference type="Pfam" id="PF07977">
    <property type="entry name" value="FabA"/>
    <property type="match status" value="1"/>
</dbReference>
<dbReference type="SUPFAM" id="SSF54637">
    <property type="entry name" value="Thioesterase/thiol ester dehydrase-isomerase"/>
    <property type="match status" value="1"/>
</dbReference>
<keyword id="KW-0963">Cytoplasm</keyword>
<keyword id="KW-0441">Lipid A biosynthesis</keyword>
<keyword id="KW-0444">Lipid biosynthesis</keyword>
<keyword id="KW-0443">Lipid metabolism</keyword>
<keyword id="KW-0456">Lyase</keyword>
<keyword id="KW-1185">Reference proteome</keyword>
<comment type="function">
    <text evidence="1">Involved in unsaturated fatty acids biosynthesis. Catalyzes the dehydration of short chain beta-hydroxyacyl-ACPs and long chain saturated and unsaturated beta-hydroxyacyl-ACPs.</text>
</comment>
<comment type="catalytic activity">
    <reaction evidence="1">
        <text>a (3R)-hydroxyacyl-[ACP] = a (2E)-enoyl-[ACP] + H2O</text>
        <dbReference type="Rhea" id="RHEA:13097"/>
        <dbReference type="Rhea" id="RHEA-COMP:9925"/>
        <dbReference type="Rhea" id="RHEA-COMP:9945"/>
        <dbReference type="ChEBI" id="CHEBI:15377"/>
        <dbReference type="ChEBI" id="CHEBI:78784"/>
        <dbReference type="ChEBI" id="CHEBI:78827"/>
        <dbReference type="EC" id="4.2.1.59"/>
    </reaction>
</comment>
<comment type="subcellular location">
    <subcellularLocation>
        <location evidence="1">Cytoplasm</location>
    </subcellularLocation>
</comment>
<comment type="similarity">
    <text evidence="1">Belongs to the thioester dehydratase family. FabZ subfamily.</text>
</comment>
<evidence type="ECO:0000255" key="1">
    <source>
        <dbReference type="HAMAP-Rule" id="MF_00406"/>
    </source>
</evidence>
<organism>
    <name type="scientific">Myxococcus xanthus (strain DK1622)</name>
    <dbReference type="NCBI Taxonomy" id="246197"/>
    <lineage>
        <taxon>Bacteria</taxon>
        <taxon>Pseudomonadati</taxon>
        <taxon>Myxococcota</taxon>
        <taxon>Myxococcia</taxon>
        <taxon>Myxococcales</taxon>
        <taxon>Cystobacterineae</taxon>
        <taxon>Myxococcaceae</taxon>
        <taxon>Myxococcus</taxon>
    </lineage>
</organism>
<proteinExistence type="inferred from homology"/>
<reference key="1">
    <citation type="journal article" date="2006" name="Proc. Natl. Acad. Sci. U.S.A.">
        <title>Evolution of sensory complexity recorded in a myxobacterial genome.</title>
        <authorList>
            <person name="Goldman B.S."/>
            <person name="Nierman W.C."/>
            <person name="Kaiser D."/>
            <person name="Slater S.C."/>
            <person name="Durkin A.S."/>
            <person name="Eisen J.A."/>
            <person name="Ronning C.M."/>
            <person name="Barbazuk W.B."/>
            <person name="Blanchard M."/>
            <person name="Field C."/>
            <person name="Halling C."/>
            <person name="Hinkle G."/>
            <person name="Iartchuk O."/>
            <person name="Kim H.S."/>
            <person name="Mackenzie C."/>
            <person name="Madupu R."/>
            <person name="Miller N."/>
            <person name="Shvartsbeyn A."/>
            <person name="Sullivan S.A."/>
            <person name="Vaudin M."/>
            <person name="Wiegand R."/>
            <person name="Kaplan H.B."/>
        </authorList>
    </citation>
    <scope>NUCLEOTIDE SEQUENCE [LARGE SCALE GENOMIC DNA]</scope>
    <source>
        <strain>DK1622</strain>
    </source>
</reference>